<sequence>MNSDVSSSEHELSQDGSSQNNPSENSVSSPNSNESVNQVELSDNPEVEPQVKNDSVDTANEQSSTSCESNIKGSDTEARLQQLEKEHETLNSQYMRIAADFDNFRKRQTRDQDDLKIQLTCTTLSEILPIVDNFERARQQLNPEGEEAQALHRSYQGLYKQLVEVLKNLGVAPMRVVDQAFDPSLHEAVMREPSDEKAEDIVIEELQRGYHLNGRVLRHALVKVSMGPGPKVINEEIPDQSASNQELSESVDGSTKDEN</sequence>
<organism>
    <name type="scientific">Prochlorococcus marinus (strain NATL2A)</name>
    <dbReference type="NCBI Taxonomy" id="59920"/>
    <lineage>
        <taxon>Bacteria</taxon>
        <taxon>Bacillati</taxon>
        <taxon>Cyanobacteriota</taxon>
        <taxon>Cyanophyceae</taxon>
        <taxon>Synechococcales</taxon>
        <taxon>Prochlorococcaceae</taxon>
        <taxon>Prochlorococcus</taxon>
    </lineage>
</organism>
<comment type="function">
    <text evidence="1">Participates actively in the response to hyperosmotic and heat shock by preventing the aggregation of stress-denatured proteins, in association with DnaK and GrpE. It is the nucleotide exchange factor for DnaK and may function as a thermosensor. Unfolded proteins bind initially to DnaJ; upon interaction with the DnaJ-bound protein, DnaK hydrolyzes its bound ATP, resulting in the formation of a stable complex. GrpE releases ADP from DnaK; ATP binding to DnaK triggers the release of the substrate protein, thus completing the reaction cycle. Several rounds of ATP-dependent interactions between DnaJ, DnaK and GrpE are required for fully efficient folding.</text>
</comment>
<comment type="subunit">
    <text evidence="1">Homodimer.</text>
</comment>
<comment type="subcellular location">
    <subcellularLocation>
        <location evidence="1">Cytoplasm</location>
    </subcellularLocation>
</comment>
<comment type="similarity">
    <text evidence="1">Belongs to the GrpE family.</text>
</comment>
<feature type="chain" id="PRO_1000053618" description="Protein GrpE">
    <location>
        <begin position="1"/>
        <end position="259"/>
    </location>
</feature>
<feature type="region of interest" description="Disordered" evidence="2">
    <location>
        <begin position="1"/>
        <end position="74"/>
    </location>
</feature>
<feature type="region of interest" description="Disordered" evidence="2">
    <location>
        <begin position="228"/>
        <end position="259"/>
    </location>
</feature>
<feature type="compositionally biased region" description="Low complexity" evidence="2">
    <location>
        <begin position="17"/>
        <end position="40"/>
    </location>
</feature>
<feature type="compositionally biased region" description="Polar residues" evidence="2">
    <location>
        <begin position="56"/>
        <end position="73"/>
    </location>
</feature>
<feature type="compositionally biased region" description="Polar residues" evidence="2">
    <location>
        <begin position="240"/>
        <end position="253"/>
    </location>
</feature>
<name>GRPE_PROMT</name>
<reference key="1">
    <citation type="journal article" date="2007" name="PLoS Genet.">
        <title>Patterns and implications of gene gain and loss in the evolution of Prochlorococcus.</title>
        <authorList>
            <person name="Kettler G.C."/>
            <person name="Martiny A.C."/>
            <person name="Huang K."/>
            <person name="Zucker J."/>
            <person name="Coleman M.L."/>
            <person name="Rodrigue S."/>
            <person name="Chen F."/>
            <person name="Lapidus A."/>
            <person name="Ferriera S."/>
            <person name="Johnson J."/>
            <person name="Steglich C."/>
            <person name="Church G.M."/>
            <person name="Richardson P."/>
            <person name="Chisholm S.W."/>
        </authorList>
    </citation>
    <scope>NUCLEOTIDE SEQUENCE [LARGE SCALE GENOMIC DNA]</scope>
    <source>
        <strain>NATL2A</strain>
    </source>
</reference>
<evidence type="ECO:0000255" key="1">
    <source>
        <dbReference type="HAMAP-Rule" id="MF_01151"/>
    </source>
</evidence>
<evidence type="ECO:0000256" key="2">
    <source>
        <dbReference type="SAM" id="MobiDB-lite"/>
    </source>
</evidence>
<accession>Q46I46</accession>
<protein>
    <recommendedName>
        <fullName evidence="1">Protein GrpE</fullName>
    </recommendedName>
    <alternativeName>
        <fullName evidence="1">HSP-70 cofactor</fullName>
    </alternativeName>
</protein>
<gene>
    <name evidence="1" type="primary">grpE</name>
    <name type="ordered locus">PMN2A_1343</name>
</gene>
<keyword id="KW-0143">Chaperone</keyword>
<keyword id="KW-0963">Cytoplasm</keyword>
<keyword id="KW-1185">Reference proteome</keyword>
<keyword id="KW-0346">Stress response</keyword>
<dbReference type="EMBL" id="CP000095">
    <property type="protein sequence ID" value="AAZ58832.1"/>
    <property type="molecule type" value="Genomic_DNA"/>
</dbReference>
<dbReference type="RefSeq" id="WP_011293976.1">
    <property type="nucleotide sequence ID" value="NC_007335.2"/>
</dbReference>
<dbReference type="SMR" id="Q46I46"/>
<dbReference type="STRING" id="59920.PMN2A_1343"/>
<dbReference type="KEGG" id="pmn:PMN2A_1343"/>
<dbReference type="HOGENOM" id="CLU_057217_5_1_3"/>
<dbReference type="OrthoDB" id="9812586at2"/>
<dbReference type="PhylomeDB" id="Q46I46"/>
<dbReference type="Proteomes" id="UP000002535">
    <property type="component" value="Chromosome"/>
</dbReference>
<dbReference type="GO" id="GO:0005737">
    <property type="term" value="C:cytoplasm"/>
    <property type="evidence" value="ECO:0007669"/>
    <property type="project" value="UniProtKB-SubCell"/>
</dbReference>
<dbReference type="GO" id="GO:0000774">
    <property type="term" value="F:adenyl-nucleotide exchange factor activity"/>
    <property type="evidence" value="ECO:0007669"/>
    <property type="project" value="InterPro"/>
</dbReference>
<dbReference type="GO" id="GO:0042803">
    <property type="term" value="F:protein homodimerization activity"/>
    <property type="evidence" value="ECO:0007669"/>
    <property type="project" value="InterPro"/>
</dbReference>
<dbReference type="GO" id="GO:0051087">
    <property type="term" value="F:protein-folding chaperone binding"/>
    <property type="evidence" value="ECO:0007669"/>
    <property type="project" value="InterPro"/>
</dbReference>
<dbReference type="GO" id="GO:0051082">
    <property type="term" value="F:unfolded protein binding"/>
    <property type="evidence" value="ECO:0007669"/>
    <property type="project" value="TreeGrafter"/>
</dbReference>
<dbReference type="GO" id="GO:0006457">
    <property type="term" value="P:protein folding"/>
    <property type="evidence" value="ECO:0007669"/>
    <property type="project" value="InterPro"/>
</dbReference>
<dbReference type="CDD" id="cd00446">
    <property type="entry name" value="GrpE"/>
    <property type="match status" value="1"/>
</dbReference>
<dbReference type="FunFam" id="2.30.22.10:FF:000001">
    <property type="entry name" value="Protein GrpE"/>
    <property type="match status" value="1"/>
</dbReference>
<dbReference type="Gene3D" id="3.90.20.20">
    <property type="match status" value="1"/>
</dbReference>
<dbReference type="Gene3D" id="2.30.22.10">
    <property type="entry name" value="Head domain of nucleotide exchange factor GrpE"/>
    <property type="match status" value="1"/>
</dbReference>
<dbReference type="HAMAP" id="MF_01151">
    <property type="entry name" value="GrpE"/>
    <property type="match status" value="1"/>
</dbReference>
<dbReference type="InterPro" id="IPR000740">
    <property type="entry name" value="GrpE"/>
</dbReference>
<dbReference type="InterPro" id="IPR013805">
    <property type="entry name" value="GrpE_coiled_coil"/>
</dbReference>
<dbReference type="InterPro" id="IPR009012">
    <property type="entry name" value="GrpE_head"/>
</dbReference>
<dbReference type="NCBIfam" id="NF010738">
    <property type="entry name" value="PRK14140.1"/>
    <property type="match status" value="1"/>
</dbReference>
<dbReference type="NCBIfam" id="NF010741">
    <property type="entry name" value="PRK14143.1"/>
    <property type="match status" value="1"/>
</dbReference>
<dbReference type="PANTHER" id="PTHR21237">
    <property type="entry name" value="GRPE PROTEIN"/>
    <property type="match status" value="1"/>
</dbReference>
<dbReference type="PANTHER" id="PTHR21237:SF23">
    <property type="entry name" value="GRPE PROTEIN HOMOLOG, MITOCHONDRIAL"/>
    <property type="match status" value="1"/>
</dbReference>
<dbReference type="Pfam" id="PF01025">
    <property type="entry name" value="GrpE"/>
    <property type="match status" value="1"/>
</dbReference>
<dbReference type="PRINTS" id="PR00773">
    <property type="entry name" value="GRPEPROTEIN"/>
</dbReference>
<dbReference type="SUPFAM" id="SSF58014">
    <property type="entry name" value="Coiled-coil domain of nucleotide exchange factor GrpE"/>
    <property type="match status" value="1"/>
</dbReference>
<dbReference type="SUPFAM" id="SSF51064">
    <property type="entry name" value="Head domain of nucleotide exchange factor GrpE"/>
    <property type="match status" value="1"/>
</dbReference>
<dbReference type="PROSITE" id="PS01071">
    <property type="entry name" value="GRPE"/>
    <property type="match status" value="1"/>
</dbReference>
<proteinExistence type="inferred from homology"/>